<keyword id="KW-0030">Aminoacyl-tRNA synthetase</keyword>
<keyword id="KW-0067">ATP-binding</keyword>
<keyword id="KW-0963">Cytoplasm</keyword>
<keyword id="KW-0436">Ligase</keyword>
<keyword id="KW-0547">Nucleotide-binding</keyword>
<keyword id="KW-0648">Protein biosynthesis</keyword>
<keyword id="KW-1185">Reference proteome</keyword>
<evidence type="ECO:0000255" key="1">
    <source>
        <dbReference type="HAMAP-Rule" id="MF_00176"/>
    </source>
</evidence>
<evidence type="ECO:0000256" key="2">
    <source>
        <dbReference type="SAM" id="MobiDB-lite"/>
    </source>
</evidence>
<sequence length="456" mass="50697">MLDIHLLRTQLDHVARLLAERNYVFPLAEFSALEAERKNLQTSTQELQARRNGASKQIGNAKSRGEDASAILAEVAHLGDELKQAESRLDQVQAALQHILLQIPNLPHSSVPEGRSESDNREVRRWGTPPTFDFSPADHVSIGERLGLLDFPTAAKISGARFSLLTGSLAHLHRALAQFMLDVHVREHGYTETYVPYLVNAESLRGTGQLPKFKEDLFEVPRRKTAEPFLENQPVAATLPSNSNSPQGGQDDDDLYLIPTSEVPLSNIVRDRIVDPELLPIKLTAHTPCFRSEAGSYGRDTRGMIRQHQFEKVELVQIVHPAHSYKALEELTGHAEAILQKLKLPYRVMALCTADMGFAAAKTYDIEVWLPQQGTYREISSCSNCEAFQARRMQARFRNEKGKPELLHTLNGSGLAVGRTLVAILENFQNADGSVSIPKVLQGYMGGTERLVPHNA</sequence>
<name>SYS_NITMU</name>
<proteinExistence type="inferred from homology"/>
<comment type="function">
    <text evidence="1">Catalyzes the attachment of serine to tRNA(Ser). Is also able to aminoacylate tRNA(Sec) with serine, to form the misacylated tRNA L-seryl-tRNA(Sec), which will be further converted into selenocysteinyl-tRNA(Sec).</text>
</comment>
<comment type="catalytic activity">
    <reaction evidence="1">
        <text>tRNA(Ser) + L-serine + ATP = L-seryl-tRNA(Ser) + AMP + diphosphate + H(+)</text>
        <dbReference type="Rhea" id="RHEA:12292"/>
        <dbReference type="Rhea" id="RHEA-COMP:9669"/>
        <dbReference type="Rhea" id="RHEA-COMP:9703"/>
        <dbReference type="ChEBI" id="CHEBI:15378"/>
        <dbReference type="ChEBI" id="CHEBI:30616"/>
        <dbReference type="ChEBI" id="CHEBI:33019"/>
        <dbReference type="ChEBI" id="CHEBI:33384"/>
        <dbReference type="ChEBI" id="CHEBI:78442"/>
        <dbReference type="ChEBI" id="CHEBI:78533"/>
        <dbReference type="ChEBI" id="CHEBI:456215"/>
        <dbReference type="EC" id="6.1.1.11"/>
    </reaction>
</comment>
<comment type="catalytic activity">
    <reaction evidence="1">
        <text>tRNA(Sec) + L-serine + ATP = L-seryl-tRNA(Sec) + AMP + diphosphate + H(+)</text>
        <dbReference type="Rhea" id="RHEA:42580"/>
        <dbReference type="Rhea" id="RHEA-COMP:9742"/>
        <dbReference type="Rhea" id="RHEA-COMP:10128"/>
        <dbReference type="ChEBI" id="CHEBI:15378"/>
        <dbReference type="ChEBI" id="CHEBI:30616"/>
        <dbReference type="ChEBI" id="CHEBI:33019"/>
        <dbReference type="ChEBI" id="CHEBI:33384"/>
        <dbReference type="ChEBI" id="CHEBI:78442"/>
        <dbReference type="ChEBI" id="CHEBI:78533"/>
        <dbReference type="ChEBI" id="CHEBI:456215"/>
        <dbReference type="EC" id="6.1.1.11"/>
    </reaction>
</comment>
<comment type="pathway">
    <text evidence="1">Aminoacyl-tRNA biosynthesis; selenocysteinyl-tRNA(Sec) biosynthesis; L-seryl-tRNA(Sec) from L-serine and tRNA(Sec): step 1/1.</text>
</comment>
<comment type="subunit">
    <text evidence="1">Homodimer. The tRNA molecule binds across the dimer.</text>
</comment>
<comment type="subcellular location">
    <subcellularLocation>
        <location evidence="1">Cytoplasm</location>
    </subcellularLocation>
</comment>
<comment type="domain">
    <text evidence="1">Consists of two distinct domains, a catalytic core and a N-terminal extension that is involved in tRNA binding.</text>
</comment>
<comment type="similarity">
    <text evidence="1">Belongs to the class-II aminoacyl-tRNA synthetase family. Type-1 seryl-tRNA synthetase subfamily.</text>
</comment>
<organism>
    <name type="scientific">Nitrosospira multiformis (strain ATCC 25196 / NCIMB 11849 / C 71)</name>
    <dbReference type="NCBI Taxonomy" id="323848"/>
    <lineage>
        <taxon>Bacteria</taxon>
        <taxon>Pseudomonadati</taxon>
        <taxon>Pseudomonadota</taxon>
        <taxon>Betaproteobacteria</taxon>
        <taxon>Nitrosomonadales</taxon>
        <taxon>Nitrosomonadaceae</taxon>
        <taxon>Nitrosospira</taxon>
    </lineage>
</organism>
<protein>
    <recommendedName>
        <fullName evidence="1">Serine--tRNA ligase</fullName>
        <ecNumber evidence="1">6.1.1.11</ecNumber>
    </recommendedName>
    <alternativeName>
        <fullName evidence="1">Seryl-tRNA synthetase</fullName>
        <shortName evidence="1">SerRS</shortName>
    </alternativeName>
    <alternativeName>
        <fullName evidence="1">Seryl-tRNA(Ser/Sec) synthetase</fullName>
    </alternativeName>
</protein>
<feature type="chain" id="PRO_1000019749" description="Serine--tRNA ligase">
    <location>
        <begin position="1"/>
        <end position="456"/>
    </location>
</feature>
<feature type="region of interest" description="Disordered" evidence="2">
    <location>
        <begin position="107"/>
        <end position="130"/>
    </location>
</feature>
<feature type="region of interest" description="Disordered" evidence="2">
    <location>
        <begin position="229"/>
        <end position="253"/>
    </location>
</feature>
<feature type="compositionally biased region" description="Basic and acidic residues" evidence="2">
    <location>
        <begin position="114"/>
        <end position="125"/>
    </location>
</feature>
<feature type="compositionally biased region" description="Polar residues" evidence="2">
    <location>
        <begin position="239"/>
        <end position="248"/>
    </location>
</feature>
<feature type="binding site" evidence="1">
    <location>
        <begin position="260"/>
        <end position="262"/>
    </location>
    <ligand>
        <name>L-serine</name>
        <dbReference type="ChEBI" id="CHEBI:33384"/>
    </ligand>
</feature>
<feature type="binding site" evidence="1">
    <location>
        <begin position="291"/>
        <end position="293"/>
    </location>
    <ligand>
        <name>ATP</name>
        <dbReference type="ChEBI" id="CHEBI:30616"/>
    </ligand>
</feature>
<feature type="binding site" evidence="1">
    <location>
        <position position="314"/>
    </location>
    <ligand>
        <name>L-serine</name>
        <dbReference type="ChEBI" id="CHEBI:33384"/>
    </ligand>
</feature>
<feature type="binding site" evidence="1">
    <location>
        <begin position="378"/>
        <end position="381"/>
    </location>
    <ligand>
        <name>ATP</name>
        <dbReference type="ChEBI" id="CHEBI:30616"/>
    </ligand>
</feature>
<feature type="binding site" evidence="1">
    <location>
        <position position="413"/>
    </location>
    <ligand>
        <name>L-serine</name>
        <dbReference type="ChEBI" id="CHEBI:33384"/>
    </ligand>
</feature>
<accession>Q2YCN3</accession>
<dbReference type="EC" id="6.1.1.11" evidence="1"/>
<dbReference type="EMBL" id="CP000103">
    <property type="protein sequence ID" value="ABB73488.1"/>
    <property type="molecule type" value="Genomic_DNA"/>
</dbReference>
<dbReference type="RefSeq" id="WP_011379542.1">
    <property type="nucleotide sequence ID" value="NC_007614.1"/>
</dbReference>
<dbReference type="SMR" id="Q2YCN3"/>
<dbReference type="STRING" id="323848.Nmul_A0180"/>
<dbReference type="KEGG" id="nmu:Nmul_A0180"/>
<dbReference type="eggNOG" id="COG0172">
    <property type="taxonomic scope" value="Bacteria"/>
</dbReference>
<dbReference type="HOGENOM" id="CLU_023797_1_0_4"/>
<dbReference type="OrthoDB" id="9804647at2"/>
<dbReference type="UniPathway" id="UPA00906">
    <property type="reaction ID" value="UER00895"/>
</dbReference>
<dbReference type="Proteomes" id="UP000002718">
    <property type="component" value="Chromosome"/>
</dbReference>
<dbReference type="GO" id="GO:0005737">
    <property type="term" value="C:cytoplasm"/>
    <property type="evidence" value="ECO:0007669"/>
    <property type="project" value="UniProtKB-SubCell"/>
</dbReference>
<dbReference type="GO" id="GO:0005524">
    <property type="term" value="F:ATP binding"/>
    <property type="evidence" value="ECO:0007669"/>
    <property type="project" value="UniProtKB-UniRule"/>
</dbReference>
<dbReference type="GO" id="GO:0004828">
    <property type="term" value="F:serine-tRNA ligase activity"/>
    <property type="evidence" value="ECO:0007669"/>
    <property type="project" value="UniProtKB-UniRule"/>
</dbReference>
<dbReference type="GO" id="GO:0016260">
    <property type="term" value="P:selenocysteine biosynthetic process"/>
    <property type="evidence" value="ECO:0007669"/>
    <property type="project" value="UniProtKB-UniRule"/>
</dbReference>
<dbReference type="GO" id="GO:0006434">
    <property type="term" value="P:seryl-tRNA aminoacylation"/>
    <property type="evidence" value="ECO:0007669"/>
    <property type="project" value="UniProtKB-UniRule"/>
</dbReference>
<dbReference type="CDD" id="cd00770">
    <property type="entry name" value="SerRS_core"/>
    <property type="match status" value="1"/>
</dbReference>
<dbReference type="Gene3D" id="3.30.930.10">
    <property type="entry name" value="Bira Bifunctional Protein, Domain 2"/>
    <property type="match status" value="1"/>
</dbReference>
<dbReference type="Gene3D" id="1.10.287.40">
    <property type="entry name" value="Serine-tRNA synthetase, tRNA binding domain"/>
    <property type="match status" value="1"/>
</dbReference>
<dbReference type="HAMAP" id="MF_00176">
    <property type="entry name" value="Ser_tRNA_synth_type1"/>
    <property type="match status" value="1"/>
</dbReference>
<dbReference type="InterPro" id="IPR002314">
    <property type="entry name" value="aa-tRNA-synt_IIb"/>
</dbReference>
<dbReference type="InterPro" id="IPR006195">
    <property type="entry name" value="aa-tRNA-synth_II"/>
</dbReference>
<dbReference type="InterPro" id="IPR045864">
    <property type="entry name" value="aa-tRNA-synth_II/BPL/LPL"/>
</dbReference>
<dbReference type="InterPro" id="IPR002317">
    <property type="entry name" value="Ser-tRNA-ligase_type_1"/>
</dbReference>
<dbReference type="InterPro" id="IPR015866">
    <property type="entry name" value="Ser-tRNA-synth_1_N"/>
</dbReference>
<dbReference type="InterPro" id="IPR042103">
    <property type="entry name" value="SerRS_1_N_sf"/>
</dbReference>
<dbReference type="InterPro" id="IPR033729">
    <property type="entry name" value="SerRS_core"/>
</dbReference>
<dbReference type="InterPro" id="IPR010978">
    <property type="entry name" value="tRNA-bd_arm"/>
</dbReference>
<dbReference type="NCBIfam" id="TIGR00414">
    <property type="entry name" value="serS"/>
    <property type="match status" value="1"/>
</dbReference>
<dbReference type="PANTHER" id="PTHR43697:SF1">
    <property type="entry name" value="SERINE--TRNA LIGASE"/>
    <property type="match status" value="1"/>
</dbReference>
<dbReference type="PANTHER" id="PTHR43697">
    <property type="entry name" value="SERYL-TRNA SYNTHETASE"/>
    <property type="match status" value="1"/>
</dbReference>
<dbReference type="Pfam" id="PF02403">
    <property type="entry name" value="Seryl_tRNA_N"/>
    <property type="match status" value="1"/>
</dbReference>
<dbReference type="Pfam" id="PF00587">
    <property type="entry name" value="tRNA-synt_2b"/>
    <property type="match status" value="1"/>
</dbReference>
<dbReference type="PIRSF" id="PIRSF001529">
    <property type="entry name" value="Ser-tRNA-synth_IIa"/>
    <property type="match status" value="1"/>
</dbReference>
<dbReference type="PRINTS" id="PR00981">
    <property type="entry name" value="TRNASYNTHSER"/>
</dbReference>
<dbReference type="SUPFAM" id="SSF55681">
    <property type="entry name" value="Class II aaRS and biotin synthetases"/>
    <property type="match status" value="1"/>
</dbReference>
<dbReference type="SUPFAM" id="SSF46589">
    <property type="entry name" value="tRNA-binding arm"/>
    <property type="match status" value="1"/>
</dbReference>
<dbReference type="PROSITE" id="PS50862">
    <property type="entry name" value="AA_TRNA_LIGASE_II"/>
    <property type="match status" value="1"/>
</dbReference>
<reference key="1">
    <citation type="submission" date="2005-08" db="EMBL/GenBank/DDBJ databases">
        <title>Complete sequence of chromosome 1 of Nitrosospira multiformis ATCC 25196.</title>
        <authorList>
            <person name="Copeland A."/>
            <person name="Lucas S."/>
            <person name="Lapidus A."/>
            <person name="Barry K."/>
            <person name="Detter J.C."/>
            <person name="Glavina T."/>
            <person name="Hammon N."/>
            <person name="Israni S."/>
            <person name="Pitluck S."/>
            <person name="Chain P."/>
            <person name="Malfatti S."/>
            <person name="Shin M."/>
            <person name="Vergez L."/>
            <person name="Schmutz J."/>
            <person name="Larimer F."/>
            <person name="Land M."/>
            <person name="Hauser L."/>
            <person name="Kyrpides N."/>
            <person name="Lykidis A."/>
            <person name="Richardson P."/>
        </authorList>
    </citation>
    <scope>NUCLEOTIDE SEQUENCE [LARGE SCALE GENOMIC DNA]</scope>
    <source>
        <strain>ATCC 25196 / NCIMB 11849 / C 71</strain>
    </source>
</reference>
<gene>
    <name evidence="1" type="primary">serS</name>
    <name type="ordered locus">Nmul_A0180</name>
</gene>